<evidence type="ECO:0000250" key="1">
    <source>
        <dbReference type="UniProtKB" id="O60479"/>
    </source>
</evidence>
<evidence type="ECO:0000255" key="2">
    <source>
        <dbReference type="PROSITE-ProRule" id="PRU00108"/>
    </source>
</evidence>
<evidence type="ECO:0000256" key="3">
    <source>
        <dbReference type="SAM" id="MobiDB-lite"/>
    </source>
</evidence>
<evidence type="ECO:0000269" key="4">
    <source>
    </source>
</evidence>
<evidence type="ECO:0000269" key="5">
    <source>
    </source>
</evidence>
<evidence type="ECO:0000269" key="6">
    <source>
    </source>
</evidence>
<evidence type="ECO:0000305" key="7"/>
<comment type="function">
    <text evidence="4">Transcriptional activator (PubMed:23371388). Activates transcription of GNRHR, via binding to the downstream activin regulatory element (DARE) in the gene promoter (PubMed:23371388).</text>
</comment>
<comment type="subunit">
    <text evidence="1 5">Heterodimer with MEIS1 (By similarity). Interacts with IPO7; the interaction facilitates nuclear translocation of DLX3 in dental papilla cells (PubMed:35922041).</text>
</comment>
<comment type="subcellular location">
    <subcellularLocation>
        <location evidence="2 5">Nucleus</location>
    </subcellularLocation>
    <subcellularLocation>
        <location evidence="5">Cytoplasm</location>
    </subcellularLocation>
</comment>
<comment type="developmental stage">
    <text evidence="6">Not expressed in the central nervous system at 16.5 dpc (PubMed:7893603). Initially expressed in the branchial arches at 9.5 dpc, expression is confined to the caudal portion of the mandibular process at 10.5 dpc (PubMed:7893603). Distally expressed in the posterior regions of the first and second branchial arches at 10.5 dpc (PubMed:7893603). Expressed in the auditory hillocks, ventral olfactory bulbs, the oral epithelium and the external naris at 12.5 dpc (PubMed:7893603). Expressed in the area under the first branchial cleft from which the external ear develops, in cell adjacent to Meckel's cartilage, in the external naris and mesenchymal cells that enclose the nasal epithelium at 13.5 dpc (PubMed:7893603). Expressed in the developing otic vesicle at 11.5 dpc, expression is then restricted to the vestibular region at 12.5 dpc and further restricted to the epithelium of the utricle and the semicircular canals at 13.5 dpc (PubMed:7893603). Expression declines thereafter with no expression detected in the developing inner ear at 14.5 dpc (PubMed:7893603). Expressed in the mesenchyme of the dental papilla at 13.5 dpc, expression remains in ameloblasts and odontoblasts at 16.5 dpc (PubMed:7893603). Expressed in a patchy pattern in the epithelium of the upper lip at 12.5 dpc, expression is increased in follicles during whisker development from 14.5 dpc until birth (PubMed:7893603).</text>
</comment>
<comment type="similarity">
    <text evidence="7">Belongs to the distal-less homeobox family.</text>
</comment>
<dbReference type="EMBL" id="S81932">
    <property type="protein sequence ID" value="AAB33879.1"/>
    <property type="molecule type" value="mRNA"/>
</dbReference>
<dbReference type="EMBL" id="BC058852">
    <property type="protein sequence ID" value="AAH58852.1"/>
    <property type="molecule type" value="mRNA"/>
</dbReference>
<dbReference type="CCDS" id="CCDS25272.1"/>
<dbReference type="RefSeq" id="NP_034185.1">
    <property type="nucleotide sequence ID" value="NM_010055.4"/>
</dbReference>
<dbReference type="SMR" id="Q64205"/>
<dbReference type="BioGRID" id="199236">
    <property type="interactions" value="1"/>
</dbReference>
<dbReference type="FunCoup" id="Q64205">
    <property type="interactions" value="763"/>
</dbReference>
<dbReference type="STRING" id="10090.ENSMUSP00000090443"/>
<dbReference type="iPTMnet" id="Q64205"/>
<dbReference type="PhosphoSitePlus" id="Q64205"/>
<dbReference type="PaxDb" id="10090-ENSMUSP00000090443"/>
<dbReference type="ProteomicsDB" id="279386"/>
<dbReference type="Antibodypedia" id="17996">
    <property type="antibodies" value="254 antibodies from 32 providers"/>
</dbReference>
<dbReference type="DNASU" id="13393"/>
<dbReference type="Ensembl" id="ENSMUST00000092768.7">
    <property type="protein sequence ID" value="ENSMUSP00000090443.6"/>
    <property type="gene ID" value="ENSMUSG00000001510.9"/>
</dbReference>
<dbReference type="GeneID" id="13393"/>
<dbReference type="KEGG" id="mmu:13393"/>
<dbReference type="UCSC" id="uc007kzy.2">
    <property type="organism name" value="mouse"/>
</dbReference>
<dbReference type="AGR" id="MGI:94903"/>
<dbReference type="CTD" id="1747"/>
<dbReference type="MGI" id="MGI:94903">
    <property type="gene designation" value="Dlx3"/>
</dbReference>
<dbReference type="VEuPathDB" id="HostDB:ENSMUSG00000001510"/>
<dbReference type="eggNOG" id="KOG0850">
    <property type="taxonomic scope" value="Eukaryota"/>
</dbReference>
<dbReference type="GeneTree" id="ENSGT00940000158951"/>
<dbReference type="HOGENOM" id="CLU_074733_1_0_1"/>
<dbReference type="InParanoid" id="Q64205"/>
<dbReference type="OMA" id="HEYYPSQ"/>
<dbReference type="OrthoDB" id="6159439at2759"/>
<dbReference type="PhylomeDB" id="Q64205"/>
<dbReference type="TreeFam" id="TF350606"/>
<dbReference type="BioGRID-ORCS" id="13393">
    <property type="hits" value="3 hits in 79 CRISPR screens"/>
</dbReference>
<dbReference type="ChiTaRS" id="Dlx3">
    <property type="organism name" value="mouse"/>
</dbReference>
<dbReference type="PRO" id="PR:Q64205"/>
<dbReference type="Proteomes" id="UP000000589">
    <property type="component" value="Chromosome 11"/>
</dbReference>
<dbReference type="RNAct" id="Q64205">
    <property type="molecule type" value="protein"/>
</dbReference>
<dbReference type="Bgee" id="ENSMUSG00000001510">
    <property type="expression patterns" value="Expressed in calcareous tooth and 157 other cell types or tissues"/>
</dbReference>
<dbReference type="ExpressionAtlas" id="Q64205">
    <property type="expression patterns" value="baseline and differential"/>
</dbReference>
<dbReference type="GO" id="GO:0005737">
    <property type="term" value="C:cytoplasm"/>
    <property type="evidence" value="ECO:0000314"/>
    <property type="project" value="UniProtKB"/>
</dbReference>
<dbReference type="GO" id="GO:0005634">
    <property type="term" value="C:nucleus"/>
    <property type="evidence" value="ECO:0000314"/>
    <property type="project" value="UniProtKB"/>
</dbReference>
<dbReference type="GO" id="GO:0003682">
    <property type="term" value="F:chromatin binding"/>
    <property type="evidence" value="ECO:0000314"/>
    <property type="project" value="MGI"/>
</dbReference>
<dbReference type="GO" id="GO:0003677">
    <property type="term" value="F:DNA binding"/>
    <property type="evidence" value="ECO:0000250"/>
    <property type="project" value="UniProtKB"/>
</dbReference>
<dbReference type="GO" id="GO:0001228">
    <property type="term" value="F:DNA-binding transcription activator activity, RNA polymerase II-specific"/>
    <property type="evidence" value="ECO:0000314"/>
    <property type="project" value="MGI"/>
</dbReference>
<dbReference type="GO" id="GO:0000978">
    <property type="term" value="F:RNA polymerase II cis-regulatory region sequence-specific DNA binding"/>
    <property type="evidence" value="ECO:0000314"/>
    <property type="project" value="MGI"/>
</dbReference>
<dbReference type="GO" id="GO:0000976">
    <property type="term" value="F:transcription cis-regulatory region binding"/>
    <property type="evidence" value="ECO:0000314"/>
    <property type="project" value="UniProtKB"/>
</dbReference>
<dbReference type="GO" id="GO:0001568">
    <property type="term" value="P:blood vessel development"/>
    <property type="evidence" value="ECO:0000315"/>
    <property type="project" value="MGI"/>
</dbReference>
<dbReference type="GO" id="GO:0030509">
    <property type="term" value="P:BMP signaling pathway"/>
    <property type="evidence" value="ECO:0000315"/>
    <property type="project" value="MGI"/>
</dbReference>
<dbReference type="GO" id="GO:0010467">
    <property type="term" value="P:gene expression"/>
    <property type="evidence" value="ECO:0000315"/>
    <property type="project" value="MGI"/>
</dbReference>
<dbReference type="GO" id="GO:0035315">
    <property type="term" value="P:hair cell differentiation"/>
    <property type="evidence" value="ECO:0000315"/>
    <property type="project" value="MGI"/>
</dbReference>
<dbReference type="GO" id="GO:0042633">
    <property type="term" value="P:hair cycle"/>
    <property type="evidence" value="ECO:0000315"/>
    <property type="project" value="MGI"/>
</dbReference>
<dbReference type="GO" id="GO:0071335">
    <property type="term" value="P:hair follicle cell proliferation"/>
    <property type="evidence" value="ECO:0000315"/>
    <property type="project" value="MGI"/>
</dbReference>
<dbReference type="GO" id="GO:0001942">
    <property type="term" value="P:hair follicle development"/>
    <property type="evidence" value="ECO:0000315"/>
    <property type="project" value="MGI"/>
</dbReference>
<dbReference type="GO" id="GO:0031069">
    <property type="term" value="P:hair follicle morphogenesis"/>
    <property type="evidence" value="ECO:0000315"/>
    <property type="project" value="MGI"/>
</dbReference>
<dbReference type="GO" id="GO:0071895">
    <property type="term" value="P:odontoblast differentiation"/>
    <property type="evidence" value="ECO:0000315"/>
    <property type="project" value="CACAO"/>
</dbReference>
<dbReference type="GO" id="GO:0042475">
    <property type="term" value="P:odontogenesis of dentin-containing tooth"/>
    <property type="evidence" value="ECO:0000315"/>
    <property type="project" value="MGI"/>
</dbReference>
<dbReference type="GO" id="GO:0001890">
    <property type="term" value="P:placenta development"/>
    <property type="evidence" value="ECO:0000315"/>
    <property type="project" value="MGI"/>
</dbReference>
<dbReference type="GO" id="GO:0045944">
    <property type="term" value="P:positive regulation of transcription by RNA polymerase II"/>
    <property type="evidence" value="ECO:0000314"/>
    <property type="project" value="UniProtKB"/>
</dbReference>
<dbReference type="GO" id="GO:0016055">
    <property type="term" value="P:Wnt signaling pathway"/>
    <property type="evidence" value="ECO:0000315"/>
    <property type="project" value="MGI"/>
</dbReference>
<dbReference type="CDD" id="cd00086">
    <property type="entry name" value="homeodomain"/>
    <property type="match status" value="1"/>
</dbReference>
<dbReference type="FunFam" id="1.10.10.60:FF:000048">
    <property type="entry name" value="Distal-less homeobox 2"/>
    <property type="match status" value="1"/>
</dbReference>
<dbReference type="Gene3D" id="1.10.10.60">
    <property type="entry name" value="Homeodomain-like"/>
    <property type="match status" value="1"/>
</dbReference>
<dbReference type="InterPro" id="IPR050460">
    <property type="entry name" value="Distal-less_Homeobox_TF"/>
</dbReference>
<dbReference type="InterPro" id="IPR022135">
    <property type="entry name" value="Distal-less_N"/>
</dbReference>
<dbReference type="InterPro" id="IPR001356">
    <property type="entry name" value="HD"/>
</dbReference>
<dbReference type="InterPro" id="IPR020479">
    <property type="entry name" value="HD_metazoa"/>
</dbReference>
<dbReference type="InterPro" id="IPR017970">
    <property type="entry name" value="Homeobox_CS"/>
</dbReference>
<dbReference type="InterPro" id="IPR009057">
    <property type="entry name" value="Homeodomain-like_sf"/>
</dbReference>
<dbReference type="InterPro" id="IPR000047">
    <property type="entry name" value="HTH_motif"/>
</dbReference>
<dbReference type="PANTHER" id="PTHR24327">
    <property type="entry name" value="HOMEOBOX PROTEIN"/>
    <property type="match status" value="1"/>
</dbReference>
<dbReference type="PANTHER" id="PTHR24327:SF28">
    <property type="entry name" value="HOMEOBOX PROTEIN DLX-3"/>
    <property type="match status" value="1"/>
</dbReference>
<dbReference type="Pfam" id="PF12413">
    <property type="entry name" value="DLL_N"/>
    <property type="match status" value="1"/>
</dbReference>
<dbReference type="Pfam" id="PF00046">
    <property type="entry name" value="Homeodomain"/>
    <property type="match status" value="1"/>
</dbReference>
<dbReference type="PRINTS" id="PR00024">
    <property type="entry name" value="HOMEOBOX"/>
</dbReference>
<dbReference type="PRINTS" id="PR00031">
    <property type="entry name" value="HTHREPRESSR"/>
</dbReference>
<dbReference type="SMART" id="SM00389">
    <property type="entry name" value="HOX"/>
    <property type="match status" value="1"/>
</dbReference>
<dbReference type="SUPFAM" id="SSF46689">
    <property type="entry name" value="Homeodomain-like"/>
    <property type="match status" value="1"/>
</dbReference>
<dbReference type="PROSITE" id="PS00027">
    <property type="entry name" value="HOMEOBOX_1"/>
    <property type="match status" value="1"/>
</dbReference>
<dbReference type="PROSITE" id="PS50071">
    <property type="entry name" value="HOMEOBOX_2"/>
    <property type="match status" value="1"/>
</dbReference>
<protein>
    <recommendedName>
        <fullName>Homeobox protein DLX-3</fullName>
    </recommendedName>
</protein>
<proteinExistence type="evidence at protein level"/>
<accession>Q64205</accession>
<gene>
    <name type="primary">Dlx3</name>
</gene>
<feature type="chain" id="PRO_0000049027" description="Homeobox protein DLX-3">
    <location>
        <begin position="1"/>
        <end position="287"/>
    </location>
</feature>
<feature type="DNA-binding region" description="Homeobox" evidence="2">
    <location>
        <begin position="129"/>
        <end position="188"/>
    </location>
</feature>
<feature type="region of interest" description="Interaction with DNA" evidence="1">
    <location>
        <begin position="131"/>
        <end position="181"/>
    </location>
</feature>
<feature type="region of interest" description="Disordered" evidence="3">
    <location>
        <begin position="195"/>
        <end position="287"/>
    </location>
</feature>
<feature type="compositionally biased region" description="Polar residues" evidence="3">
    <location>
        <begin position="198"/>
        <end position="209"/>
    </location>
</feature>
<feature type="compositionally biased region" description="Pro residues" evidence="3">
    <location>
        <begin position="227"/>
        <end position="236"/>
    </location>
</feature>
<feature type="compositionally biased region" description="Polar residues" evidence="3">
    <location>
        <begin position="247"/>
        <end position="265"/>
    </location>
</feature>
<feature type="compositionally biased region" description="Pro residues" evidence="3">
    <location>
        <begin position="277"/>
        <end position="287"/>
    </location>
</feature>
<sequence>MSGSFDRKLSSILTDISSSLSCHAGSKDSPTLPESTVTDLGYYSAPQHDYYSGQPYGQTVNPYTYHHQFNLNGLAGTGAYSPKSEYTYGGSYRQYGAYREQPLPAQDPVSVKEEPEAEVRMVNGKPKKVRKPRTIYSSYQLAALQRRFQKAQYLALPERAELAAQLGLTQTQVKIWFQNRRSKFKKLYKNGEVPLEHSPNNSDSMACNSPPSPALWDTSSHSTPAPARNPLPPPLPYSASPNYLDDPTNSWYHTQNLSGPHLQQQPPQPATLHHASPGPPPNPGAVY</sequence>
<reference key="1">
    <citation type="journal article" date="1994" name="Mech. Dev.">
        <title>Differential and overlapping expression domains of Dlx-2 and Dlx-3 suggest distinct roles for Distal-less homeobox genes in craniofacial development.</title>
        <authorList>
            <person name="Robinson G.W."/>
            <person name="Mahon K.A."/>
        </authorList>
    </citation>
    <scope>NUCLEOTIDE SEQUENCE [MRNA]</scope>
    <scope>DEVELOPMENTAL STAGE</scope>
    <source>
        <strain>FVB/N</strain>
    </source>
</reference>
<reference key="2">
    <citation type="journal article" date="2004" name="Genome Res.">
        <title>The status, quality, and expansion of the NIH full-length cDNA project: the Mammalian Gene Collection (MGC).</title>
        <authorList>
            <consortium name="The MGC Project Team"/>
        </authorList>
    </citation>
    <scope>NUCLEOTIDE SEQUENCE [LARGE SCALE MRNA]</scope>
    <source>
        <strain>C57BL/6J</strain>
        <tissue>Embryo</tissue>
    </source>
</reference>
<reference key="3">
    <citation type="journal article" date="2013" name="Mol. Endocrinol.">
        <title>Msx1 homeodomain protein represses the alphaGSU and GnRH receptor genes during gonadotrope development.</title>
        <authorList>
            <person name="Xie H."/>
            <person name="Cherrington B.D."/>
            <person name="Meadows J.D."/>
            <person name="Witham E.A."/>
            <person name="Mellon P.L."/>
        </authorList>
    </citation>
    <scope>FUNCTION</scope>
</reference>
<reference key="4">
    <citation type="journal article" date="2022" name="Stem Cells">
        <title>IPO7 Promotes Odontoblastic Differentiation and Inhibits Osteoblastic Differentiation Through Regulation of RUNX2 Expression and Translocation.</title>
        <authorList>
            <person name="Zhang Y."/>
            <person name="Zhang H."/>
            <person name="Xiao Z."/>
            <person name="Yuan G."/>
            <person name="Yang G."/>
        </authorList>
    </citation>
    <scope>INTERACTION WITH IPO7</scope>
    <scope>SUBCELLULAR LOCATION</scope>
</reference>
<organism>
    <name type="scientific">Mus musculus</name>
    <name type="common">Mouse</name>
    <dbReference type="NCBI Taxonomy" id="10090"/>
    <lineage>
        <taxon>Eukaryota</taxon>
        <taxon>Metazoa</taxon>
        <taxon>Chordata</taxon>
        <taxon>Craniata</taxon>
        <taxon>Vertebrata</taxon>
        <taxon>Euteleostomi</taxon>
        <taxon>Mammalia</taxon>
        <taxon>Eutheria</taxon>
        <taxon>Euarchontoglires</taxon>
        <taxon>Glires</taxon>
        <taxon>Rodentia</taxon>
        <taxon>Myomorpha</taxon>
        <taxon>Muroidea</taxon>
        <taxon>Muridae</taxon>
        <taxon>Murinae</taxon>
        <taxon>Mus</taxon>
        <taxon>Mus</taxon>
    </lineage>
</organism>
<keyword id="KW-0010">Activator</keyword>
<keyword id="KW-0963">Cytoplasm</keyword>
<keyword id="KW-0217">Developmental protein</keyword>
<keyword id="KW-0238">DNA-binding</keyword>
<keyword id="KW-0371">Homeobox</keyword>
<keyword id="KW-0539">Nucleus</keyword>
<keyword id="KW-1185">Reference proteome</keyword>
<keyword id="KW-0804">Transcription</keyword>
<keyword id="KW-0805">Transcription regulation</keyword>
<name>DLX3_MOUSE</name>